<protein>
    <recommendedName>
        <fullName>DNA-directed RNA polymerase subunit omega</fullName>
        <shortName>RNAP omega subunit</shortName>
        <ecNumber>2.7.7.6</ecNumber>
    </recommendedName>
    <alternativeName>
        <fullName>RNA polymerase omega subunit</fullName>
    </alternativeName>
    <alternativeName>
        <fullName>Transcriptase subunit omega</fullName>
    </alternativeName>
</protein>
<organism>
    <name type="scientific">Bradyrhizobium diazoefficiens (strain JCM 10833 / BCRC 13528 / IAM 13628 / NBRC 14792 / USDA 110)</name>
    <dbReference type="NCBI Taxonomy" id="224911"/>
    <lineage>
        <taxon>Bacteria</taxon>
        <taxon>Pseudomonadati</taxon>
        <taxon>Pseudomonadota</taxon>
        <taxon>Alphaproteobacteria</taxon>
        <taxon>Hyphomicrobiales</taxon>
        <taxon>Nitrobacteraceae</taxon>
        <taxon>Bradyrhizobium</taxon>
    </lineage>
</organism>
<sequence length="130" mass="14354">MARVTVEDCIDKVDNRFDLVLLAAHRARMISSGSQLTVDRDNDKNPVVSLREIADTTISPEDLREELVHSLQKFVEVDEPEPDTVPLIGSAGASVDADDTEVAVERMTEEELLKGLEGLAPPEEQPEEDE</sequence>
<name>RPOZ_BRADU</name>
<feature type="chain" id="PRO_0000128921" description="DNA-directed RNA polymerase subunit omega">
    <location>
        <begin position="1"/>
        <end position="130"/>
    </location>
</feature>
<feature type="region of interest" description="Disordered" evidence="2">
    <location>
        <begin position="79"/>
        <end position="98"/>
    </location>
</feature>
<feature type="region of interest" description="Disordered" evidence="2">
    <location>
        <begin position="109"/>
        <end position="130"/>
    </location>
</feature>
<feature type="sequence conflict" description="In Ref. 1; AAF04326." evidence="3" ref="1">
    <original>T</original>
    <variation>K</variation>
    <location>
        <position position="37"/>
    </location>
</feature>
<feature type="sequence conflict" description="In Ref. 1." evidence="3" ref="1">
    <original>S</original>
    <variation>T</variation>
    <location>
        <position position="94"/>
    </location>
</feature>
<feature type="sequence conflict" description="In Ref. 1." evidence="3" ref="1">
    <original>E</original>
    <variation>Q</variation>
    <location>
        <position position="127"/>
    </location>
</feature>
<accession>Q9RH70</accession>
<proteinExistence type="inferred from homology"/>
<evidence type="ECO:0000250" key="1"/>
<evidence type="ECO:0000256" key="2">
    <source>
        <dbReference type="SAM" id="MobiDB-lite"/>
    </source>
</evidence>
<evidence type="ECO:0000305" key="3"/>
<comment type="function">
    <text evidence="1">Promotes RNA polymerase assembly. Latches the N- and C-terminal regions of the beta' subunit thereby facilitating its interaction with the beta and alpha subunits (By similarity).</text>
</comment>
<comment type="catalytic activity">
    <reaction>
        <text>RNA(n) + a ribonucleoside 5'-triphosphate = RNA(n+1) + diphosphate</text>
        <dbReference type="Rhea" id="RHEA:21248"/>
        <dbReference type="Rhea" id="RHEA-COMP:14527"/>
        <dbReference type="Rhea" id="RHEA-COMP:17342"/>
        <dbReference type="ChEBI" id="CHEBI:33019"/>
        <dbReference type="ChEBI" id="CHEBI:61557"/>
        <dbReference type="ChEBI" id="CHEBI:140395"/>
        <dbReference type="EC" id="2.7.7.6"/>
    </reaction>
</comment>
<comment type="subunit">
    <text evidence="1">The RNAP catalytic core consists of 2 alpha, 1 beta, 1 beta' and 1 omega subunit. When a sigma factor is associated with the core the holoenzyme is formed, which can initiate transcription (By similarity).</text>
</comment>
<comment type="similarity">
    <text evidence="3">Belongs to the RNA polymerase subunit omega family.</text>
</comment>
<comment type="sequence caution" evidence="3">
    <conflict type="frameshift">
        <sequence resource="EMBL-CDS" id="AAF04326"/>
    </conflict>
</comment>
<keyword id="KW-0240">DNA-directed RNA polymerase</keyword>
<keyword id="KW-0548">Nucleotidyltransferase</keyword>
<keyword id="KW-1185">Reference proteome</keyword>
<keyword id="KW-0804">Transcription</keyword>
<keyword id="KW-0808">Transferase</keyword>
<dbReference type="EC" id="2.7.7.6"/>
<dbReference type="EMBL" id="AF065159">
    <property type="protein sequence ID" value="AAF04326.1"/>
    <property type="status" value="ALT_FRAME"/>
    <property type="molecule type" value="Genomic_DNA"/>
</dbReference>
<dbReference type="EMBL" id="BA000040">
    <property type="protein sequence ID" value="BAC50331.1"/>
    <property type="molecule type" value="Genomic_DNA"/>
</dbReference>
<dbReference type="RefSeq" id="NP_771706.1">
    <property type="nucleotide sequence ID" value="NC_004463.1"/>
</dbReference>
<dbReference type="RefSeq" id="WP_008133017.1">
    <property type="nucleotide sequence ID" value="NZ_CP011360.1"/>
</dbReference>
<dbReference type="SMR" id="Q9RH70"/>
<dbReference type="FunCoup" id="Q9RH70">
    <property type="interactions" value="210"/>
</dbReference>
<dbReference type="STRING" id="224911.AAV28_22700"/>
<dbReference type="EnsemblBacteria" id="BAC50331">
    <property type="protein sequence ID" value="BAC50331"/>
    <property type="gene ID" value="BAC50331"/>
</dbReference>
<dbReference type="GeneID" id="92966630"/>
<dbReference type="KEGG" id="bja:bll5066"/>
<dbReference type="PATRIC" id="fig|224911.44.peg.4934"/>
<dbReference type="eggNOG" id="COG1758">
    <property type="taxonomic scope" value="Bacteria"/>
</dbReference>
<dbReference type="HOGENOM" id="CLU_125406_2_0_5"/>
<dbReference type="InParanoid" id="Q9RH70"/>
<dbReference type="OrthoDB" id="9796300at2"/>
<dbReference type="PhylomeDB" id="Q9RH70"/>
<dbReference type="PRO" id="PR:Q9RH70"/>
<dbReference type="Proteomes" id="UP000002526">
    <property type="component" value="Chromosome"/>
</dbReference>
<dbReference type="GO" id="GO:0000345">
    <property type="term" value="C:cytosolic DNA-directed RNA polymerase complex"/>
    <property type="evidence" value="ECO:0000318"/>
    <property type="project" value="GO_Central"/>
</dbReference>
<dbReference type="GO" id="GO:0001000">
    <property type="term" value="F:bacterial-type RNA polymerase core enzyme binding"/>
    <property type="evidence" value="ECO:0000318"/>
    <property type="project" value="GO_Central"/>
</dbReference>
<dbReference type="GO" id="GO:0003677">
    <property type="term" value="F:DNA binding"/>
    <property type="evidence" value="ECO:0007669"/>
    <property type="project" value="UniProtKB-UniRule"/>
</dbReference>
<dbReference type="GO" id="GO:0003899">
    <property type="term" value="F:DNA-directed RNA polymerase activity"/>
    <property type="evidence" value="ECO:0007669"/>
    <property type="project" value="UniProtKB-UniRule"/>
</dbReference>
<dbReference type="GO" id="GO:0006352">
    <property type="term" value="P:DNA-templated transcription initiation"/>
    <property type="evidence" value="ECO:0000318"/>
    <property type="project" value="GO_Central"/>
</dbReference>
<dbReference type="Gene3D" id="3.90.940.10">
    <property type="match status" value="1"/>
</dbReference>
<dbReference type="HAMAP" id="MF_00366">
    <property type="entry name" value="RNApol_bact_RpoZ"/>
    <property type="match status" value="1"/>
</dbReference>
<dbReference type="InterPro" id="IPR003716">
    <property type="entry name" value="DNA-dir_RNA_pol_omega"/>
</dbReference>
<dbReference type="InterPro" id="IPR006110">
    <property type="entry name" value="Pol_omega/Rpo6/RPB6"/>
</dbReference>
<dbReference type="InterPro" id="IPR036161">
    <property type="entry name" value="RPB6/omega-like_sf"/>
</dbReference>
<dbReference type="NCBIfam" id="TIGR00690">
    <property type="entry name" value="rpoZ"/>
    <property type="match status" value="1"/>
</dbReference>
<dbReference type="PANTHER" id="PTHR34476">
    <property type="entry name" value="DNA-DIRECTED RNA POLYMERASE SUBUNIT OMEGA"/>
    <property type="match status" value="1"/>
</dbReference>
<dbReference type="PANTHER" id="PTHR34476:SF1">
    <property type="entry name" value="DNA-DIRECTED RNA POLYMERASE SUBUNIT OMEGA"/>
    <property type="match status" value="1"/>
</dbReference>
<dbReference type="Pfam" id="PF01192">
    <property type="entry name" value="RNA_pol_Rpb6"/>
    <property type="match status" value="1"/>
</dbReference>
<dbReference type="SMART" id="SM01409">
    <property type="entry name" value="RNA_pol_Rpb6"/>
    <property type="match status" value="1"/>
</dbReference>
<dbReference type="SUPFAM" id="SSF63562">
    <property type="entry name" value="RPB6/omega subunit-like"/>
    <property type="match status" value="1"/>
</dbReference>
<gene>
    <name type="primary">rpoZ</name>
    <name type="synonym">rnpO</name>
    <name type="ordered locus">bll5066</name>
</gene>
<reference key="1">
    <citation type="submission" date="2000-01" db="EMBL/GenBank/DDBJ databases">
        <title>Extended DNA sequencing in the upstream region of sipF in Bradyrhizobium japonicum.</title>
        <authorList>
            <person name="Mueller P."/>
            <person name="Stingel D."/>
        </authorList>
    </citation>
    <scope>NUCLEOTIDE SEQUENCE [GENOMIC DNA]</scope>
    <source>
        <strain>USDA 110spc4</strain>
    </source>
</reference>
<reference key="2">
    <citation type="journal article" date="2002" name="DNA Res.">
        <title>Complete genomic sequence of nitrogen-fixing symbiotic bacterium Bradyrhizobium japonicum USDA110.</title>
        <authorList>
            <person name="Kaneko T."/>
            <person name="Nakamura Y."/>
            <person name="Sato S."/>
            <person name="Minamisawa K."/>
            <person name="Uchiumi T."/>
            <person name="Sasamoto S."/>
            <person name="Watanabe A."/>
            <person name="Idesawa K."/>
            <person name="Iriguchi M."/>
            <person name="Kawashima K."/>
            <person name="Kohara M."/>
            <person name="Matsumoto M."/>
            <person name="Shimpo S."/>
            <person name="Tsuruoka H."/>
            <person name="Wada T."/>
            <person name="Yamada M."/>
            <person name="Tabata S."/>
        </authorList>
    </citation>
    <scope>NUCLEOTIDE SEQUENCE [LARGE SCALE GENOMIC DNA]</scope>
    <source>
        <strain>JCM 10833 / BCRC 13528 / IAM 13628 / NBRC 14792 / USDA 110</strain>
    </source>
</reference>